<dbReference type="EC" id="1.14.13.232" evidence="3"/>
<dbReference type="EMBL" id="DQ143963">
    <property type="protein sequence ID" value="AAZ78329.1"/>
    <property type="molecule type" value="Genomic_DNA"/>
</dbReference>
<dbReference type="RefSeq" id="WP_003981023.1">
    <property type="nucleotide sequence ID" value="NZ_SADA01000149.1"/>
</dbReference>
<dbReference type="SMR" id="Q3S8R0"/>
<dbReference type="KEGG" id="ag:AAZ78329"/>
<dbReference type="OMA" id="HDPASLC"/>
<dbReference type="BRENDA" id="1.14.13.232">
    <property type="organism ID" value="6084"/>
</dbReference>
<dbReference type="UniPathway" id="UPA00926"/>
<dbReference type="GO" id="GO:0071949">
    <property type="term" value="F:FAD binding"/>
    <property type="evidence" value="ECO:0007669"/>
    <property type="project" value="InterPro"/>
</dbReference>
<dbReference type="GO" id="GO:0004497">
    <property type="term" value="F:monooxygenase activity"/>
    <property type="evidence" value="ECO:0007669"/>
    <property type="project" value="UniProtKB-KW"/>
</dbReference>
<dbReference type="GO" id="GO:0017000">
    <property type="term" value="P:antibiotic biosynthetic process"/>
    <property type="evidence" value="ECO:0007669"/>
    <property type="project" value="UniProtKB-KW"/>
</dbReference>
<dbReference type="Gene3D" id="3.50.50.60">
    <property type="entry name" value="FAD/NAD(P)-binding domain"/>
    <property type="match status" value="2"/>
</dbReference>
<dbReference type="InterPro" id="IPR002938">
    <property type="entry name" value="FAD-bd"/>
</dbReference>
<dbReference type="InterPro" id="IPR036188">
    <property type="entry name" value="FAD/NAD-bd_sf"/>
</dbReference>
<dbReference type="InterPro" id="IPR050631">
    <property type="entry name" value="PheA/TfdB_FAD_monoxygenase"/>
</dbReference>
<dbReference type="PANTHER" id="PTHR43476">
    <property type="entry name" value="3-(3-HYDROXY-PHENYL)PROPIONATE/3-HYDROXYCINNAMIC ACID HYDROXYLASE"/>
    <property type="match status" value="1"/>
</dbReference>
<dbReference type="PANTHER" id="PTHR43476:SF5">
    <property type="entry name" value="FAD-DEPENDENT MONOOXYGENASE"/>
    <property type="match status" value="1"/>
</dbReference>
<dbReference type="Pfam" id="PF01494">
    <property type="entry name" value="FAD_binding_3"/>
    <property type="match status" value="1"/>
</dbReference>
<dbReference type="PRINTS" id="PR00420">
    <property type="entry name" value="RNGMNOXGNASE"/>
</dbReference>
<dbReference type="SUPFAM" id="SSF51905">
    <property type="entry name" value="FAD/NAD(P)-binding domain"/>
    <property type="match status" value="1"/>
</dbReference>
<comment type="function">
    <text evidence="3">Involved in the biosynthesis of the tetracycline antibiotic, oxytetracycline. Catalyzes the C-4 hydroxylation of 6-methylpretetramide to yield the intermediate 4-hydroxyl-6-methylpretetramid, which is subsequently hydroxylated by OxyL to yield 4-keto-anhydrotetracycline. OxyE serves as the ancillary enzyme to assist OxyL in the hydroxylation of C-4.</text>
</comment>
<comment type="catalytic activity">
    <reaction evidence="3">
        <text>6-methylpretetramide + NADPH + O2 + 2 H(+) = 4-hydroxy-6-methylpretetramide + NADP(+) + H2O</text>
        <dbReference type="Rhea" id="RHEA:50008"/>
        <dbReference type="ChEBI" id="CHEBI:15377"/>
        <dbReference type="ChEBI" id="CHEBI:15378"/>
        <dbReference type="ChEBI" id="CHEBI:15379"/>
        <dbReference type="ChEBI" id="CHEBI:28464"/>
        <dbReference type="ChEBI" id="CHEBI:57783"/>
        <dbReference type="ChEBI" id="CHEBI:58349"/>
        <dbReference type="ChEBI" id="CHEBI:132734"/>
        <dbReference type="EC" id="1.14.13.232"/>
    </reaction>
</comment>
<comment type="cofactor">
    <cofactor evidence="1">
        <name>FAD</name>
        <dbReference type="ChEBI" id="CHEBI:57692"/>
    </cofactor>
</comment>
<comment type="pathway">
    <text evidence="7">Antibiotic biosynthesis; oxytetracycline biosynthesis.</text>
</comment>
<comment type="disruption phenotype">
    <text evidence="3">Cells lacking this gene produce oxytetracycline with a yield of only 50% compared to the wild-type.</text>
</comment>
<comment type="similarity">
    <text evidence="6">Belongs to the PheA/TfdB FAD monooxygenase family.</text>
</comment>
<gene>
    <name evidence="4" type="primary">oxyE</name>
</gene>
<reference key="1">
    <citation type="journal article" date="2006" name="Appl. Environ. Microbiol.">
        <title>Engineered biosynthesis of a novel amidated polyketide, using the malonamyl-specific initmguPCPB_SPHCRiation module from the oxytetracycline polyketide synthase.</title>
        <authorList>
            <person name="Zhang W."/>
            <person name="Ames B.D."/>
            <person name="Tsai S.C."/>
            <person name="Tang Y."/>
        </authorList>
    </citation>
    <scope>NUCLEOTIDE SEQUENCE [GENOMIC DNA]</scope>
</reference>
<reference key="2">
    <citation type="journal article" date="2008" name="J. Am. Chem. Soc.">
        <title>Identifying the minimal enzymes required for anhydrotetracycline biosynthesis.</title>
        <authorList>
            <person name="Zhang W."/>
            <person name="Watanabe K."/>
            <person name="Cai X."/>
            <person name="Jung M.E."/>
            <person name="Tang Y."/>
            <person name="Zhan J."/>
        </authorList>
    </citation>
    <scope>PATHWAY</scope>
</reference>
<reference key="3">
    <citation type="journal article" date="2009" name="ChemBioChem">
        <title>Identification of OxyE as an ancillary oxygenase during tetracycline biosynthesis.</title>
        <authorList>
            <person name="Wang P."/>
            <person name="Zhang W."/>
            <person name="Zhan J."/>
            <person name="Tang Y."/>
        </authorList>
    </citation>
    <scope>FUNCTION</scope>
    <scope>CATALYTIC ACTIVITY</scope>
    <scope>DISRUPTION PHENOTYPE</scope>
    <source>
        <strain>ATCC 10970</strain>
    </source>
</reference>
<proteinExistence type="evidence at protein level"/>
<keyword id="KW-0045">Antibiotic biosynthesis</keyword>
<keyword id="KW-0274">FAD</keyword>
<keyword id="KW-0285">Flavoprotein</keyword>
<keyword id="KW-0503">Monooxygenase</keyword>
<keyword id="KW-0521">NADP</keyword>
<keyword id="KW-0560">Oxidoreductase</keyword>
<evidence type="ECO:0000250" key="1">
    <source>
        <dbReference type="UniProtKB" id="P42535"/>
    </source>
</evidence>
<evidence type="ECO:0000255" key="2"/>
<evidence type="ECO:0000269" key="3">
    <source>
    </source>
</evidence>
<evidence type="ECO:0000303" key="4">
    <source>
    </source>
</evidence>
<evidence type="ECO:0000303" key="5">
    <source>
    </source>
</evidence>
<evidence type="ECO:0000305" key="6"/>
<evidence type="ECO:0000305" key="7">
    <source>
    </source>
</evidence>
<protein>
    <recommendedName>
        <fullName evidence="5">6-methylpretetramide 4-monooxygenase</fullName>
        <ecNumber evidence="3">1.14.13.232</ecNumber>
    </recommendedName>
</protein>
<name>OXYE_STRRM</name>
<organism>
    <name type="scientific">Streptomyces rimosus</name>
    <dbReference type="NCBI Taxonomy" id="1927"/>
    <lineage>
        <taxon>Bacteria</taxon>
        <taxon>Bacillati</taxon>
        <taxon>Actinomycetota</taxon>
        <taxon>Actinomycetes</taxon>
        <taxon>Kitasatosporales</taxon>
        <taxon>Streptomycetaceae</taxon>
        <taxon>Streptomyces</taxon>
    </lineage>
</organism>
<feature type="chain" id="PRO_0000442356" description="6-methylpretetramide 4-monooxygenase">
    <location>
        <begin position="1"/>
        <end position="418"/>
    </location>
</feature>
<feature type="binding site" evidence="2">
    <location>
        <begin position="15"/>
        <end position="44"/>
    </location>
    <ligand>
        <name>FAD</name>
        <dbReference type="ChEBI" id="CHEBI:57692"/>
    </ligand>
</feature>
<feature type="binding site" evidence="2">
    <location>
        <begin position="289"/>
        <end position="299"/>
    </location>
    <ligand>
        <name>FAD</name>
        <dbReference type="ChEBI" id="CHEBI:57692"/>
    </ligand>
</feature>
<accession>Q3S8R0</accession>
<sequence length="418" mass="45622">MTGHPRPPADGAHTDVCVVGGGPAGLTLALLMLRSGARVTLVERSRSLDRAYRGEILQPGGQALLDALGVLEGARRRGCHEHDGFRLEERGRTLINGDYRRLPGPYNCLLSLPQQHLLTDLLERCRAHPRFTCLTGTKVNGLVEEGGVVRGVVCGGGADGLVVRADCVVGADGRYSTVRKLAGIPYDRIELFDQDVLWCKLTAPATRTVRIFRAGGNPVLAYTSFPDCVQLGWTLPHKGYQALAERGFAHVKERIRAAVPEYADTVDQQLNSFKDVSLLDVFAGSARRWARDGLLLIGDSAHTHSPIGAQGINLAIQDAVAAHPVLCEGLRRRDLSERFLDAVAARRRPETERATRVQVMQSRMMLSTGRVSAAVRPKAAMLVSRTPAYRSVLRRIAYGDQTLRVRSDLFEEGEPATV</sequence>